<evidence type="ECO:0000255" key="1">
    <source>
        <dbReference type="HAMAP-Rule" id="MF_00043"/>
    </source>
</evidence>
<gene>
    <name evidence="1" type="primary">ef1b</name>
    <name type="ordered locus">Igni_0509</name>
</gene>
<accession>A8A9U0</accession>
<name>EF1B_IGNH4</name>
<proteinExistence type="inferred from homology"/>
<comment type="function">
    <text evidence="1">Promotes the exchange of GDP for GTP in EF-1-alpha/GDP, thus allowing the regeneration of EF-1-alpha/GTP that could then be used to form the ternary complex EF-1-alpha/GTP/AAtRNA.</text>
</comment>
<comment type="similarity">
    <text evidence="1">Belongs to the EF-1-beta/EF-1-delta family.</text>
</comment>
<dbReference type="EMBL" id="CP000816">
    <property type="protein sequence ID" value="ABU81692.1"/>
    <property type="molecule type" value="Genomic_DNA"/>
</dbReference>
<dbReference type="SMR" id="A8A9U0"/>
<dbReference type="STRING" id="453591.Igni_0509"/>
<dbReference type="KEGG" id="iho:Igni_0509"/>
<dbReference type="eggNOG" id="arCOG01988">
    <property type="taxonomic scope" value="Archaea"/>
</dbReference>
<dbReference type="HOGENOM" id="CLU_165896_1_0_2"/>
<dbReference type="PhylomeDB" id="A8A9U0"/>
<dbReference type="Proteomes" id="UP000000262">
    <property type="component" value="Chromosome"/>
</dbReference>
<dbReference type="GO" id="GO:0003746">
    <property type="term" value="F:translation elongation factor activity"/>
    <property type="evidence" value="ECO:0007669"/>
    <property type="project" value="UniProtKB-UniRule"/>
</dbReference>
<dbReference type="CDD" id="cd00292">
    <property type="entry name" value="EF1B"/>
    <property type="match status" value="1"/>
</dbReference>
<dbReference type="Gene3D" id="3.30.70.60">
    <property type="match status" value="1"/>
</dbReference>
<dbReference type="HAMAP" id="MF_00043">
    <property type="entry name" value="EF1_beta"/>
    <property type="match status" value="1"/>
</dbReference>
<dbReference type="InterPro" id="IPR036219">
    <property type="entry name" value="eEF-1beta-like_sf"/>
</dbReference>
<dbReference type="InterPro" id="IPR014038">
    <property type="entry name" value="EF1B_bsu/dsu_GNE"/>
</dbReference>
<dbReference type="InterPro" id="IPR014717">
    <property type="entry name" value="Transl_elong_EF1B/ribsomal_bS6"/>
</dbReference>
<dbReference type="InterPro" id="IPR004542">
    <property type="entry name" value="Transl_elong_EF1B_B_arc"/>
</dbReference>
<dbReference type="NCBIfam" id="TIGR00489">
    <property type="entry name" value="aEF-1_beta"/>
    <property type="match status" value="1"/>
</dbReference>
<dbReference type="NCBIfam" id="NF001670">
    <property type="entry name" value="PRK00435.1"/>
    <property type="match status" value="1"/>
</dbReference>
<dbReference type="PANTHER" id="PTHR39647">
    <property type="entry name" value="ELONGATION FACTOR 1-BETA"/>
    <property type="match status" value="1"/>
</dbReference>
<dbReference type="PANTHER" id="PTHR39647:SF1">
    <property type="entry name" value="ELONGATION FACTOR 1-BETA"/>
    <property type="match status" value="1"/>
</dbReference>
<dbReference type="Pfam" id="PF00736">
    <property type="entry name" value="EF1_GNE"/>
    <property type="match status" value="1"/>
</dbReference>
<dbReference type="PIRSF" id="PIRSF006521">
    <property type="entry name" value="Transl_elong_EF1B_B_arc"/>
    <property type="match status" value="1"/>
</dbReference>
<dbReference type="SMART" id="SM00888">
    <property type="entry name" value="EF1_GNE"/>
    <property type="match status" value="1"/>
</dbReference>
<dbReference type="SUPFAM" id="SSF54984">
    <property type="entry name" value="eEF-1beta-like"/>
    <property type="match status" value="1"/>
</dbReference>
<keyword id="KW-0251">Elongation factor</keyword>
<keyword id="KW-0648">Protein biosynthesis</keyword>
<keyword id="KW-1185">Reference proteome</keyword>
<protein>
    <recommendedName>
        <fullName evidence="1">Elongation factor 1-beta</fullName>
        <shortName evidence="1">EF-1-beta</shortName>
    </recommendedName>
    <alternativeName>
        <fullName evidence="1">aEF-1beta</fullName>
    </alternativeName>
</protein>
<feature type="chain" id="PRO_0000366421" description="Elongation factor 1-beta">
    <location>
        <begin position="1"/>
        <end position="94"/>
    </location>
</feature>
<organism>
    <name type="scientific">Ignicoccus hospitalis (strain KIN4/I / DSM 18386 / JCM 14125)</name>
    <dbReference type="NCBI Taxonomy" id="453591"/>
    <lineage>
        <taxon>Archaea</taxon>
        <taxon>Thermoproteota</taxon>
        <taxon>Thermoprotei</taxon>
        <taxon>Desulfurococcales</taxon>
        <taxon>Desulfurococcaceae</taxon>
        <taxon>Ignicoccus</taxon>
    </lineage>
</organism>
<reference key="1">
    <citation type="journal article" date="2008" name="Genome Biol.">
        <title>A genomic analysis of the archaeal system Ignicoccus hospitalis-Nanoarchaeum equitans.</title>
        <authorList>
            <person name="Podar M."/>
            <person name="Anderson I."/>
            <person name="Makarova K.S."/>
            <person name="Elkins J.G."/>
            <person name="Ivanova N."/>
            <person name="Wall M.A."/>
            <person name="Lykidis A."/>
            <person name="Mavromatis K."/>
            <person name="Sun H."/>
            <person name="Hudson M.E."/>
            <person name="Chen W."/>
            <person name="Deciu C."/>
            <person name="Hutchison D."/>
            <person name="Eads J.R."/>
            <person name="Anderson A."/>
            <person name="Fernandes F."/>
            <person name="Szeto E."/>
            <person name="Lapidus A."/>
            <person name="Kyrpides N.C."/>
            <person name="Saier M.H. Jr."/>
            <person name="Richardson P.M."/>
            <person name="Rachel R."/>
            <person name="Huber H."/>
            <person name="Eisen J.A."/>
            <person name="Koonin E.V."/>
            <person name="Keller M."/>
            <person name="Stetter K.O."/>
        </authorList>
    </citation>
    <scope>NUCLEOTIDE SEQUENCE [LARGE SCALE GENOMIC DNA]</scope>
    <source>
        <strain>KIN4/I / DSM 18386 / JCM 14125</strain>
    </source>
</reference>
<sequence>MVAMVKVLVVAKVYPDSVERNLEEMVENIKKSLPEGYELLQYQKVPVAFGLNLLKVYVAMPEETEGGTEKLEEVLKGVEGVSEVEIETVHRMSY</sequence>